<evidence type="ECO:0000269" key="1">
    <source>
    </source>
</evidence>
<evidence type="ECO:0000269" key="2">
    <source>
    </source>
</evidence>
<evidence type="ECO:0000303" key="3">
    <source>
    </source>
</evidence>
<evidence type="ECO:0000305" key="4"/>
<accession>P0AEA5</accession>
<accession>P18404</accession>
<accession>P77115</accession>
<accession>Q2MBZ8</accession>
<organism>
    <name type="scientific">Escherichia coli (strain K12)</name>
    <dbReference type="NCBI Taxonomy" id="83333"/>
    <lineage>
        <taxon>Bacteria</taxon>
        <taxon>Pseudomonadati</taxon>
        <taxon>Pseudomonadota</taxon>
        <taxon>Gammaproteobacteria</taxon>
        <taxon>Enterobacterales</taxon>
        <taxon>Enterobacteriaceae</taxon>
        <taxon>Escherichia</taxon>
    </lineage>
</organism>
<keyword id="KW-0997">Cell inner membrane</keyword>
<keyword id="KW-1003">Cell membrane</keyword>
<keyword id="KW-0350">Heme biosynthesis</keyword>
<keyword id="KW-0472">Membrane</keyword>
<keyword id="KW-1185">Reference proteome</keyword>
<keyword id="KW-0808">Transferase</keyword>
<keyword id="KW-0812">Transmembrane</keyword>
<keyword id="KW-1133">Transmembrane helix</keyword>
<sequence>MMFKQYLQVTKPGIIFGNLISVIGGFLLASKGSIDYPLFIYTLVGVSLVVASGCVFNNYIDRDIDRKMERTKNRVLVKGLISPAVSLVYATLLGIAGFMLLWFGANPLACWLGVMGFVVYVGVYSLYMKRHSVYGTLIGSLSGAAPPVIGYCAVTGEFDSGAAILLAIFSLWQMPHSYAIAIFRFKDYQAANIPVLPVVKGISVAKNHITLYIIAFAVATLMLSLGGYAGYKYLVVAAAVSVWWLGMALRGYKVADDRIWARKLFGFSIIAITALSVMMSVDFMVPDSHTLLAAVW</sequence>
<dbReference type="EC" id="2.5.1.141" evidence="2"/>
<dbReference type="EMBL" id="J05492">
    <property type="protein sequence ID" value="AAA23635.1"/>
    <property type="molecule type" value="Genomic_DNA"/>
</dbReference>
<dbReference type="EMBL" id="U82664">
    <property type="protein sequence ID" value="AAB40184.1"/>
    <property type="status" value="ALT_INIT"/>
    <property type="molecule type" value="Genomic_DNA"/>
</dbReference>
<dbReference type="EMBL" id="U00096">
    <property type="protein sequence ID" value="AAC73531.1"/>
    <property type="molecule type" value="Genomic_DNA"/>
</dbReference>
<dbReference type="EMBL" id="AP009048">
    <property type="protein sequence ID" value="BAE76208.1"/>
    <property type="molecule type" value="Genomic_DNA"/>
</dbReference>
<dbReference type="PIR" id="E42226">
    <property type="entry name" value="E42226"/>
</dbReference>
<dbReference type="RefSeq" id="NP_414962.1">
    <property type="nucleotide sequence ID" value="NC_000913.3"/>
</dbReference>
<dbReference type="RefSeq" id="WP_000971336.1">
    <property type="nucleotide sequence ID" value="NZ_SSZK01000009.1"/>
</dbReference>
<dbReference type="SMR" id="P0AEA5"/>
<dbReference type="BioGRID" id="4259839">
    <property type="interactions" value="24"/>
</dbReference>
<dbReference type="DIP" id="DIP-47946N"/>
<dbReference type="FunCoup" id="P0AEA5">
    <property type="interactions" value="667"/>
</dbReference>
<dbReference type="STRING" id="511145.b0428"/>
<dbReference type="PaxDb" id="511145-b0428"/>
<dbReference type="EnsemblBacteria" id="AAC73531">
    <property type="protein sequence ID" value="AAC73531"/>
    <property type="gene ID" value="b0428"/>
</dbReference>
<dbReference type="GeneID" id="75202853"/>
<dbReference type="GeneID" id="945073"/>
<dbReference type="KEGG" id="ecj:JW0418"/>
<dbReference type="KEGG" id="eco:b0428"/>
<dbReference type="KEGG" id="ecoc:C3026_02090"/>
<dbReference type="PATRIC" id="fig|1411691.4.peg.1849"/>
<dbReference type="EchoBASE" id="EB0179"/>
<dbReference type="eggNOG" id="COG0109">
    <property type="taxonomic scope" value="Bacteria"/>
</dbReference>
<dbReference type="HOGENOM" id="CLU_029631_0_0_6"/>
<dbReference type="InParanoid" id="P0AEA5"/>
<dbReference type="OMA" id="TKPGIIM"/>
<dbReference type="OrthoDB" id="9814417at2"/>
<dbReference type="PhylomeDB" id="P0AEA5"/>
<dbReference type="BioCyc" id="EcoCyc:HEMEOSYN-MONOMER"/>
<dbReference type="BioCyc" id="MetaCyc:HEMEOSYN-MONOMER"/>
<dbReference type="BRENDA" id="2.5.1.141">
    <property type="organism ID" value="2026"/>
</dbReference>
<dbReference type="UniPathway" id="UPA00834">
    <property type="reaction ID" value="UER00712"/>
</dbReference>
<dbReference type="PRO" id="PR:P0AEA5"/>
<dbReference type="Proteomes" id="UP000000625">
    <property type="component" value="Chromosome"/>
</dbReference>
<dbReference type="GO" id="GO:0005886">
    <property type="term" value="C:plasma membrane"/>
    <property type="evidence" value="ECO:0000314"/>
    <property type="project" value="EcoCyc"/>
</dbReference>
<dbReference type="GO" id="GO:0008495">
    <property type="term" value="F:protoheme IX farnesyltransferase activity"/>
    <property type="evidence" value="ECO:0000314"/>
    <property type="project" value="EcoliWiki"/>
</dbReference>
<dbReference type="GO" id="GO:0048034">
    <property type="term" value="P:heme O biosynthetic process"/>
    <property type="evidence" value="ECO:0000314"/>
    <property type="project" value="EcoliWiki"/>
</dbReference>
<dbReference type="CDD" id="cd13957">
    <property type="entry name" value="PT_UbiA_Cox10"/>
    <property type="match status" value="1"/>
</dbReference>
<dbReference type="FunFam" id="1.10.357.140:FF:000001">
    <property type="entry name" value="Protoheme IX farnesyltransferase"/>
    <property type="match status" value="1"/>
</dbReference>
<dbReference type="Gene3D" id="1.10.357.140">
    <property type="entry name" value="UbiA prenyltransferase"/>
    <property type="match status" value="1"/>
</dbReference>
<dbReference type="HAMAP" id="MF_00154">
    <property type="entry name" value="CyoE_CtaB"/>
    <property type="match status" value="1"/>
</dbReference>
<dbReference type="InterPro" id="IPR006369">
    <property type="entry name" value="Protohaem_IX_farnesylTrfase"/>
</dbReference>
<dbReference type="InterPro" id="IPR000537">
    <property type="entry name" value="UbiA_prenyltransferase"/>
</dbReference>
<dbReference type="InterPro" id="IPR030470">
    <property type="entry name" value="UbiA_prenylTrfase_CS"/>
</dbReference>
<dbReference type="InterPro" id="IPR044878">
    <property type="entry name" value="UbiA_sf"/>
</dbReference>
<dbReference type="NCBIfam" id="TIGR01473">
    <property type="entry name" value="cyoE_ctaB"/>
    <property type="match status" value="1"/>
</dbReference>
<dbReference type="NCBIfam" id="NF003348">
    <property type="entry name" value="PRK04375.1-1"/>
    <property type="match status" value="1"/>
</dbReference>
<dbReference type="PANTHER" id="PTHR43448">
    <property type="entry name" value="PROTOHEME IX FARNESYLTRANSFERASE, MITOCHONDRIAL"/>
    <property type="match status" value="1"/>
</dbReference>
<dbReference type="PANTHER" id="PTHR43448:SF2">
    <property type="entry name" value="PROTOHEME IX FARNESYLTRANSFERASE, MITOCHONDRIAL"/>
    <property type="match status" value="1"/>
</dbReference>
<dbReference type="Pfam" id="PF01040">
    <property type="entry name" value="UbiA"/>
    <property type="match status" value="1"/>
</dbReference>
<dbReference type="PROSITE" id="PS00943">
    <property type="entry name" value="UBIA"/>
    <property type="match status" value="1"/>
</dbReference>
<protein>
    <recommendedName>
        <fullName>Protoheme IX farnesyltransferase</fullName>
        <ecNumber evidence="2">2.5.1.141</ecNumber>
    </recommendedName>
    <alternativeName>
        <fullName>Heme B farnesyltransferase</fullName>
    </alternativeName>
    <alternativeName>
        <fullName evidence="3">Heme O synthase</fullName>
    </alternativeName>
</protein>
<reference key="1">
    <citation type="journal article" date="1990" name="J. Biol. Chem.">
        <title>The sequence of the cyo operon indicates substantial structural similarities between the cytochrome o ubiquinol oxidase of Escherichia coli and the aa3-type family of cytochrome c oxidases.</title>
        <authorList>
            <person name="Chepuri V."/>
            <person name="Lemieux L."/>
            <person name="Au D.C.T."/>
            <person name="Gennis R.B."/>
        </authorList>
    </citation>
    <scope>NUCLEOTIDE SEQUENCE [GENOMIC DNA]</scope>
</reference>
<reference key="2">
    <citation type="submission" date="1997-01" db="EMBL/GenBank/DDBJ databases">
        <title>Sequence of minutes 4-25 of Escherichia coli.</title>
        <authorList>
            <person name="Chung E."/>
            <person name="Allen E."/>
            <person name="Araujo R."/>
            <person name="Aparicio A.M."/>
            <person name="Davis K."/>
            <person name="Duncan M."/>
            <person name="Federspiel N."/>
            <person name="Hyman R."/>
            <person name="Kalman S."/>
            <person name="Komp C."/>
            <person name="Kurdi O."/>
            <person name="Lew H."/>
            <person name="Lin D."/>
            <person name="Namath A."/>
            <person name="Oefner P."/>
            <person name="Roberts D."/>
            <person name="Schramm S."/>
            <person name="Davis R.W."/>
        </authorList>
    </citation>
    <scope>NUCLEOTIDE SEQUENCE [LARGE SCALE GENOMIC DNA]</scope>
    <source>
        <strain>K12 / MG1655 / ATCC 47076</strain>
    </source>
</reference>
<reference key="3">
    <citation type="journal article" date="1997" name="Science">
        <title>The complete genome sequence of Escherichia coli K-12.</title>
        <authorList>
            <person name="Blattner F.R."/>
            <person name="Plunkett G. III"/>
            <person name="Bloch C.A."/>
            <person name="Perna N.T."/>
            <person name="Burland V."/>
            <person name="Riley M."/>
            <person name="Collado-Vides J."/>
            <person name="Glasner J.D."/>
            <person name="Rode C.K."/>
            <person name="Mayhew G.F."/>
            <person name="Gregor J."/>
            <person name="Davis N.W."/>
            <person name="Kirkpatrick H.A."/>
            <person name="Goeden M.A."/>
            <person name="Rose D.J."/>
            <person name="Mau B."/>
            <person name="Shao Y."/>
        </authorList>
    </citation>
    <scope>NUCLEOTIDE SEQUENCE [LARGE SCALE GENOMIC DNA]</scope>
    <source>
        <strain>K12 / MG1655 / ATCC 47076</strain>
    </source>
</reference>
<reference key="4">
    <citation type="journal article" date="2006" name="Mol. Syst. Biol.">
        <title>Highly accurate genome sequences of Escherichia coli K-12 strains MG1655 and W3110.</title>
        <authorList>
            <person name="Hayashi K."/>
            <person name="Morooka N."/>
            <person name="Yamamoto Y."/>
            <person name="Fujita K."/>
            <person name="Isono K."/>
            <person name="Choi S."/>
            <person name="Ohtsubo E."/>
            <person name="Baba T."/>
            <person name="Wanner B.L."/>
            <person name="Mori H."/>
            <person name="Horiuchi T."/>
        </authorList>
    </citation>
    <scope>NUCLEOTIDE SEQUENCE [LARGE SCALE GENOMIC DNA]</scope>
    <source>
        <strain>K12 / W3110 / ATCC 27325 / DSM 5911</strain>
    </source>
</reference>
<reference key="5">
    <citation type="journal article" date="1990" name="J. Biol. Chem.">
        <title>The use of gene fusions to determine the topology of all of the subunits of the cytochrome o terminal oxidase complex of Escherichia coli.</title>
        <authorList>
            <person name="Chepuri V."/>
            <person name="Gennis R.B."/>
        </authorList>
    </citation>
    <scope>TOPOLOGY</scope>
</reference>
<reference key="6">
    <citation type="journal article" date="1992" name="Biochem. Biophys. Res. Commun.">
        <title>Heme O biosynthesis in Escherichia coli: the cyoE gene in the cytochrome bo operon encodes a protoheme IX farnesyltransferase.</title>
        <authorList>
            <person name="Saiki K."/>
            <person name="Mogi T."/>
            <person name="Anraku Y."/>
        </authorList>
    </citation>
    <scope>FUNCTION</scope>
</reference>
<reference key="7">
    <citation type="journal article" date="1993" name="J. Biol. Chem.">
        <title>In vitro heme O synthesis by the cyoE gene product from Escherichia coli.</title>
        <authorList>
            <person name="Saiki K."/>
            <person name="Mogi T."/>
            <person name="Ogura K."/>
            <person name="Anraku Y."/>
        </authorList>
    </citation>
    <scope>TOPOLOGY</scope>
    <scope>FUNCTION</scope>
    <scope>CATALYTIC ACTIVITY</scope>
    <scope>SUBCELLULAR LOCATION</scope>
</reference>
<reference key="8">
    <citation type="journal article" date="1993" name="J. Biol. Chem.">
        <title>Identification of the functional domains in heme O synthase. Site-directed mutagenesis studies on the cyoE gene of the cytochrome bo operon in Escherichia coli.</title>
        <authorList>
            <person name="Saiki K."/>
            <person name="Mogi T."/>
            <person name="Hori H."/>
            <person name="Tsubaki M."/>
            <person name="Anraku Y."/>
        </authorList>
    </citation>
    <scope>MUTAGENESIS</scope>
</reference>
<reference key="9">
    <citation type="journal article" date="2005" name="Science">
        <title>Global topology analysis of the Escherichia coli inner membrane proteome.</title>
        <authorList>
            <person name="Daley D.O."/>
            <person name="Rapp M."/>
            <person name="Granseth E."/>
            <person name="Melen K."/>
            <person name="Drew D."/>
            <person name="von Heijne G."/>
        </authorList>
    </citation>
    <scope>TOPOLOGY [LARGE SCALE ANALYSIS]</scope>
    <source>
        <strain>K12 / MG1655 / ATCC 47076</strain>
    </source>
</reference>
<feature type="chain" id="PRO_0000162895" description="Protoheme IX farnesyltransferase">
    <location>
        <begin position="1"/>
        <end position="296"/>
    </location>
</feature>
<feature type="topological domain" description="Cytoplasmic" evidence="4">
    <location>
        <begin position="1"/>
        <end position="9"/>
    </location>
</feature>
<feature type="transmembrane region" description="Helical" evidence="4">
    <location>
        <begin position="10"/>
        <end position="28"/>
    </location>
</feature>
<feature type="topological domain" description="Periplasmic" evidence="4">
    <location>
        <begin position="29"/>
        <end position="37"/>
    </location>
</feature>
<feature type="transmembrane region" description="Helical" evidence="4">
    <location>
        <begin position="38"/>
        <end position="56"/>
    </location>
</feature>
<feature type="topological domain" description="Cytoplasmic" evidence="4">
    <location>
        <begin position="57"/>
        <end position="78"/>
    </location>
</feature>
<feature type="transmembrane region" description="Helical" evidence="4">
    <location>
        <begin position="79"/>
        <end position="97"/>
    </location>
</feature>
<feature type="topological domain" description="Periplasmic" evidence="4">
    <location>
        <begin position="98"/>
        <end position="107"/>
    </location>
</feature>
<feature type="transmembrane region" description="Helical" evidence="4">
    <location>
        <begin position="108"/>
        <end position="126"/>
    </location>
</feature>
<feature type="topological domain" description="Cytoplasmic" evidence="4">
    <location>
        <begin position="127"/>
        <end position="197"/>
    </location>
</feature>
<feature type="transmembrane region" description="Helical" evidence="4">
    <location>
        <begin position="198"/>
        <end position="216"/>
    </location>
</feature>
<feature type="topological domain" description="Periplasmic" evidence="4">
    <location>
        <begin position="217"/>
        <end position="228"/>
    </location>
</feature>
<feature type="transmembrane region" description="Helical" evidence="4">
    <location>
        <begin position="229"/>
        <end position="247"/>
    </location>
</feature>
<feature type="topological domain" description="Cytoplasmic" evidence="4">
    <location>
        <begin position="248"/>
        <end position="268"/>
    </location>
</feature>
<feature type="transmembrane region" description="Helical" evidence="4">
    <location>
        <begin position="269"/>
        <end position="287"/>
    </location>
</feature>
<feature type="topological domain" description="Periplasmic" evidence="4">
    <location>
        <begin position="288"/>
        <end position="296"/>
    </location>
</feature>
<comment type="function">
    <text evidence="1 2">Converts heme B (protoheme IX) to heme O by substitution of the vinyl group on carbon 2 of heme B porphyrin ring with a hydroxyethyl farnesyl side group.</text>
</comment>
<comment type="catalytic activity">
    <reaction evidence="2">
        <text>heme b + (2E,6E)-farnesyl diphosphate + H2O = Fe(II)-heme o + diphosphate</text>
        <dbReference type="Rhea" id="RHEA:28070"/>
        <dbReference type="ChEBI" id="CHEBI:15377"/>
        <dbReference type="ChEBI" id="CHEBI:33019"/>
        <dbReference type="ChEBI" id="CHEBI:60344"/>
        <dbReference type="ChEBI" id="CHEBI:60530"/>
        <dbReference type="ChEBI" id="CHEBI:175763"/>
        <dbReference type="EC" id="2.5.1.141"/>
    </reaction>
</comment>
<comment type="pathway">
    <text>Porphyrin-containing compound metabolism; heme O biosynthesis; heme O from protoheme: step 1/1.</text>
</comment>
<comment type="subcellular location">
    <subcellularLocation>
        <location evidence="2">Cell inner membrane</location>
        <topology>Multi-pass membrane protein</topology>
    </subcellularLocation>
</comment>
<comment type="miscellaneous">
    <text>Carbon 2 of the heme B porphyrin ring is defined according to the Fischer nomenclature.</text>
</comment>
<comment type="similarity">
    <text evidence="4">Belongs to the UbiA prenyltransferase family. Protoheme IX farnesyltransferase subfamily.</text>
</comment>
<comment type="sequence caution" evidence="4">
    <conflict type="erroneous initiation">
        <sequence resource="EMBL-CDS" id="AAB40184"/>
    </conflict>
</comment>
<proteinExistence type="evidence at protein level"/>
<name>CYOE_ECOLI</name>
<gene>
    <name type="primary">cyoE</name>
    <name type="ordered locus">b0428</name>
    <name type="ordered locus">JW0418</name>
</gene>